<dbReference type="EC" id="4.1.99.17" evidence="1"/>
<dbReference type="EMBL" id="CP001127">
    <property type="protein sequence ID" value="ACF89304.1"/>
    <property type="molecule type" value="Genomic_DNA"/>
</dbReference>
<dbReference type="RefSeq" id="WP_000108416.1">
    <property type="nucleotide sequence ID" value="NC_011094.1"/>
</dbReference>
<dbReference type="SMR" id="B4TQK4"/>
<dbReference type="KEGG" id="sew:SeSA_A4374"/>
<dbReference type="HOGENOM" id="CLU_013181_2_1_6"/>
<dbReference type="UniPathway" id="UPA00060"/>
<dbReference type="Proteomes" id="UP000001865">
    <property type="component" value="Chromosome"/>
</dbReference>
<dbReference type="GO" id="GO:0005829">
    <property type="term" value="C:cytosol"/>
    <property type="evidence" value="ECO:0007669"/>
    <property type="project" value="TreeGrafter"/>
</dbReference>
<dbReference type="GO" id="GO:0051539">
    <property type="term" value="F:4 iron, 4 sulfur cluster binding"/>
    <property type="evidence" value="ECO:0007669"/>
    <property type="project" value="UniProtKB-KW"/>
</dbReference>
<dbReference type="GO" id="GO:0016830">
    <property type="term" value="F:carbon-carbon lyase activity"/>
    <property type="evidence" value="ECO:0007669"/>
    <property type="project" value="InterPro"/>
</dbReference>
<dbReference type="GO" id="GO:0008270">
    <property type="term" value="F:zinc ion binding"/>
    <property type="evidence" value="ECO:0007669"/>
    <property type="project" value="UniProtKB-UniRule"/>
</dbReference>
<dbReference type="GO" id="GO:0009228">
    <property type="term" value="P:thiamine biosynthetic process"/>
    <property type="evidence" value="ECO:0007669"/>
    <property type="project" value="UniProtKB-KW"/>
</dbReference>
<dbReference type="GO" id="GO:0009229">
    <property type="term" value="P:thiamine diphosphate biosynthetic process"/>
    <property type="evidence" value="ECO:0007669"/>
    <property type="project" value="UniProtKB-UniRule"/>
</dbReference>
<dbReference type="FunFam" id="3.20.20.540:FF:000001">
    <property type="entry name" value="Phosphomethylpyrimidine synthase"/>
    <property type="match status" value="1"/>
</dbReference>
<dbReference type="Gene3D" id="6.10.250.620">
    <property type="match status" value="1"/>
</dbReference>
<dbReference type="Gene3D" id="3.20.20.540">
    <property type="entry name" value="Radical SAM ThiC family, central domain"/>
    <property type="match status" value="1"/>
</dbReference>
<dbReference type="HAMAP" id="MF_00089">
    <property type="entry name" value="ThiC"/>
    <property type="match status" value="1"/>
</dbReference>
<dbReference type="InterPro" id="IPR037509">
    <property type="entry name" value="ThiC"/>
</dbReference>
<dbReference type="InterPro" id="IPR025747">
    <property type="entry name" value="ThiC-associated_dom"/>
</dbReference>
<dbReference type="InterPro" id="IPR038521">
    <property type="entry name" value="ThiC/Bza_core_dom"/>
</dbReference>
<dbReference type="InterPro" id="IPR002817">
    <property type="entry name" value="ThiC/BzaA/B"/>
</dbReference>
<dbReference type="NCBIfam" id="NF006763">
    <property type="entry name" value="PRK09284.1"/>
    <property type="match status" value="1"/>
</dbReference>
<dbReference type="NCBIfam" id="NF009895">
    <property type="entry name" value="PRK13352.1"/>
    <property type="match status" value="1"/>
</dbReference>
<dbReference type="NCBIfam" id="TIGR00190">
    <property type="entry name" value="thiC"/>
    <property type="match status" value="1"/>
</dbReference>
<dbReference type="PANTHER" id="PTHR30557:SF1">
    <property type="entry name" value="PHOSPHOMETHYLPYRIMIDINE SYNTHASE, CHLOROPLASTIC"/>
    <property type="match status" value="1"/>
</dbReference>
<dbReference type="PANTHER" id="PTHR30557">
    <property type="entry name" value="THIAMINE BIOSYNTHESIS PROTEIN THIC"/>
    <property type="match status" value="1"/>
</dbReference>
<dbReference type="Pfam" id="PF13667">
    <property type="entry name" value="ThiC-associated"/>
    <property type="match status" value="1"/>
</dbReference>
<dbReference type="Pfam" id="PF01964">
    <property type="entry name" value="ThiC_Rad_SAM"/>
    <property type="match status" value="1"/>
</dbReference>
<dbReference type="SFLD" id="SFLDF00407">
    <property type="entry name" value="phosphomethylpyrimidine_syntha"/>
    <property type="match status" value="1"/>
</dbReference>
<dbReference type="SFLD" id="SFLDG01114">
    <property type="entry name" value="phosphomethylpyrimidine_syntha"/>
    <property type="match status" value="1"/>
</dbReference>
<dbReference type="SFLD" id="SFLDS00113">
    <property type="entry name" value="Radical_SAM_Phosphomethylpyrim"/>
    <property type="match status" value="1"/>
</dbReference>
<proteinExistence type="inferred from homology"/>
<comment type="function">
    <text evidence="1">Catalyzes the synthesis of the hydroxymethylpyrimidine phosphate (HMP-P) moiety of thiamine from aminoimidazole ribotide (AIR) in a radical S-adenosyl-L-methionine (SAM)-dependent reaction.</text>
</comment>
<comment type="catalytic activity">
    <reaction evidence="1">
        <text>5-amino-1-(5-phospho-beta-D-ribosyl)imidazole + S-adenosyl-L-methionine = 4-amino-2-methyl-5-(phosphooxymethyl)pyrimidine + CO + 5'-deoxyadenosine + formate + L-methionine + 3 H(+)</text>
        <dbReference type="Rhea" id="RHEA:24840"/>
        <dbReference type="ChEBI" id="CHEBI:15378"/>
        <dbReference type="ChEBI" id="CHEBI:15740"/>
        <dbReference type="ChEBI" id="CHEBI:17245"/>
        <dbReference type="ChEBI" id="CHEBI:17319"/>
        <dbReference type="ChEBI" id="CHEBI:57844"/>
        <dbReference type="ChEBI" id="CHEBI:58354"/>
        <dbReference type="ChEBI" id="CHEBI:59789"/>
        <dbReference type="ChEBI" id="CHEBI:137981"/>
        <dbReference type="EC" id="4.1.99.17"/>
    </reaction>
</comment>
<comment type="cofactor">
    <cofactor evidence="1">
        <name>[4Fe-4S] cluster</name>
        <dbReference type="ChEBI" id="CHEBI:49883"/>
    </cofactor>
    <text evidence="1">Binds 1 [4Fe-4S] cluster per subunit. The cluster is coordinated with 3 cysteines and an exchangeable S-adenosyl-L-methionine.</text>
</comment>
<comment type="pathway">
    <text evidence="1">Cofactor biosynthesis; thiamine diphosphate biosynthesis.</text>
</comment>
<comment type="subunit">
    <text evidence="1">Homodimer.</text>
</comment>
<comment type="similarity">
    <text evidence="1">Belongs to the ThiC family.</text>
</comment>
<keyword id="KW-0004">4Fe-4S</keyword>
<keyword id="KW-0408">Iron</keyword>
<keyword id="KW-0411">Iron-sulfur</keyword>
<keyword id="KW-0456">Lyase</keyword>
<keyword id="KW-0479">Metal-binding</keyword>
<keyword id="KW-0949">S-adenosyl-L-methionine</keyword>
<keyword id="KW-0784">Thiamine biosynthesis</keyword>
<keyword id="KW-0862">Zinc</keyword>
<organism>
    <name type="scientific">Salmonella schwarzengrund (strain CVM19633)</name>
    <dbReference type="NCBI Taxonomy" id="439843"/>
    <lineage>
        <taxon>Bacteria</taxon>
        <taxon>Pseudomonadati</taxon>
        <taxon>Pseudomonadota</taxon>
        <taxon>Gammaproteobacteria</taxon>
        <taxon>Enterobacterales</taxon>
        <taxon>Enterobacteriaceae</taxon>
        <taxon>Salmonella</taxon>
    </lineage>
</organism>
<protein>
    <recommendedName>
        <fullName evidence="1">Phosphomethylpyrimidine synthase</fullName>
        <ecNumber evidence="1">4.1.99.17</ecNumber>
    </recommendedName>
    <alternativeName>
        <fullName evidence="1">Hydroxymethylpyrimidine phosphate synthase</fullName>
        <shortName evidence="1">HMP-P synthase</shortName>
        <shortName evidence="1">HMP-phosphate synthase</shortName>
        <shortName evidence="1">HMPP synthase</shortName>
    </alternativeName>
    <alternativeName>
        <fullName evidence="1">Thiamine biosynthesis protein ThiC</fullName>
    </alternativeName>
</protein>
<sequence length="631" mass="70874">MSTTTLTRREQRAKAQHFIDTLEGTAFPNSKRIYVTGSQHDIRVPMREIQLSPTLIGGSKDNPQFEENEAVPVYDTSGPYGDPEVAINVQQGLAKLRQPWIDARNDSEELDDRSSAYTRERLADDGLDDLRFTGLLTPKRAKAGKRVTQLHYARNGIVTPEMEFIAIRENMGRERIRSEVLRHQHPGMSFGARLPENITPEFVRDEVAAGRAIIPANINHPESEPMIIGRNFLVKVNANIGNSAVTSSIEEEVEKLVWATRWGADTVMDLSTGRYIHETREWILRNSPVPIGTVPIYQALEKVNGIAEDLTWEAFRDTLLEQAEQGVDYFTIHAGVLLRYVPMTAKRLTGIVSRGGSIMAKWCLSHHKENFLFEHFREICEICAAYDVSLSLGDGLRPGSIQDANDEAQFSELHTLGELTKIAWEYDVQVMIEGPGHVPMHMIQRNMTEELEHCHEAPFYTLGPLTTDIAPGYDHFTSGIGAAMIGWFGCAMLCYVTPKEHLGLPNKEDVKQGLITYKIAAHAADLAKGHPGAQIRDNAMSKARFEFRWEDQFNLALDPFTARAWHDETLPQESGKVAHFCSMCGPKFCSMKISQEVRDYAAAQTIEVGMADMSENFRAKGGEIYLKREEV</sequence>
<reference key="1">
    <citation type="journal article" date="2011" name="J. Bacteriol.">
        <title>Comparative genomics of 28 Salmonella enterica isolates: evidence for CRISPR-mediated adaptive sublineage evolution.</title>
        <authorList>
            <person name="Fricke W.F."/>
            <person name="Mammel M.K."/>
            <person name="McDermott P.F."/>
            <person name="Tartera C."/>
            <person name="White D.G."/>
            <person name="Leclerc J.E."/>
            <person name="Ravel J."/>
            <person name="Cebula T.A."/>
        </authorList>
    </citation>
    <scope>NUCLEOTIDE SEQUENCE [LARGE SCALE GENOMIC DNA]</scope>
    <source>
        <strain>CVM19633</strain>
    </source>
</reference>
<accession>B4TQK4</accession>
<name>THIC_SALSV</name>
<evidence type="ECO:0000255" key="1">
    <source>
        <dbReference type="HAMAP-Rule" id="MF_00089"/>
    </source>
</evidence>
<feature type="chain" id="PRO_1000093234" description="Phosphomethylpyrimidine synthase">
    <location>
        <begin position="1"/>
        <end position="631"/>
    </location>
</feature>
<feature type="binding site" evidence="1">
    <location>
        <position position="239"/>
    </location>
    <ligand>
        <name>substrate</name>
    </ligand>
</feature>
<feature type="binding site" evidence="1">
    <location>
        <position position="268"/>
    </location>
    <ligand>
        <name>substrate</name>
    </ligand>
</feature>
<feature type="binding site" evidence="1">
    <location>
        <position position="297"/>
    </location>
    <ligand>
        <name>substrate</name>
    </ligand>
</feature>
<feature type="binding site" evidence="1">
    <location>
        <position position="333"/>
    </location>
    <ligand>
        <name>substrate</name>
    </ligand>
</feature>
<feature type="binding site" evidence="1">
    <location>
        <begin position="353"/>
        <end position="355"/>
    </location>
    <ligand>
        <name>substrate</name>
    </ligand>
</feature>
<feature type="binding site" evidence="1">
    <location>
        <begin position="394"/>
        <end position="397"/>
    </location>
    <ligand>
        <name>substrate</name>
    </ligand>
</feature>
<feature type="binding site" evidence="1">
    <location>
        <position position="433"/>
    </location>
    <ligand>
        <name>substrate</name>
    </ligand>
</feature>
<feature type="binding site" evidence="1">
    <location>
        <position position="437"/>
    </location>
    <ligand>
        <name>Zn(2+)</name>
        <dbReference type="ChEBI" id="CHEBI:29105"/>
    </ligand>
</feature>
<feature type="binding site" evidence="1">
    <location>
        <position position="460"/>
    </location>
    <ligand>
        <name>substrate</name>
    </ligand>
</feature>
<feature type="binding site" evidence="1">
    <location>
        <position position="501"/>
    </location>
    <ligand>
        <name>Zn(2+)</name>
        <dbReference type="ChEBI" id="CHEBI:29105"/>
    </ligand>
</feature>
<feature type="binding site" evidence="1">
    <location>
        <position position="581"/>
    </location>
    <ligand>
        <name>[4Fe-4S] cluster</name>
        <dbReference type="ChEBI" id="CHEBI:49883"/>
        <note>4Fe-4S-S-AdoMet</note>
    </ligand>
</feature>
<feature type="binding site" evidence="1">
    <location>
        <position position="584"/>
    </location>
    <ligand>
        <name>[4Fe-4S] cluster</name>
        <dbReference type="ChEBI" id="CHEBI:49883"/>
        <note>4Fe-4S-S-AdoMet</note>
    </ligand>
</feature>
<feature type="binding site" evidence="1">
    <location>
        <position position="589"/>
    </location>
    <ligand>
        <name>[4Fe-4S] cluster</name>
        <dbReference type="ChEBI" id="CHEBI:49883"/>
        <note>4Fe-4S-S-AdoMet</note>
    </ligand>
</feature>
<gene>
    <name evidence="1" type="primary">thiC</name>
    <name type="ordered locus">SeSA_A4374</name>
</gene>